<accession>Q04JX6</accession>
<feature type="chain" id="PRO_1000012490" description="3-phosphoshikimate 1-carboxyvinyltransferase">
    <location>
        <begin position="1"/>
        <end position="427"/>
    </location>
</feature>
<feature type="active site" description="Proton acceptor" evidence="1">
    <location>
        <position position="312"/>
    </location>
</feature>
<feature type="binding site" evidence="1">
    <location>
        <position position="20"/>
    </location>
    <ligand>
        <name>3-phosphoshikimate</name>
        <dbReference type="ChEBI" id="CHEBI:145989"/>
    </ligand>
</feature>
<feature type="binding site" evidence="1">
    <location>
        <position position="20"/>
    </location>
    <ligand>
        <name>phosphoenolpyruvate</name>
        <dbReference type="ChEBI" id="CHEBI:58702"/>
    </ligand>
</feature>
<feature type="binding site" evidence="1">
    <location>
        <position position="21"/>
    </location>
    <ligand>
        <name>3-phosphoshikimate</name>
        <dbReference type="ChEBI" id="CHEBI:145989"/>
    </ligand>
</feature>
<feature type="binding site" evidence="1">
    <location>
        <position position="25"/>
    </location>
    <ligand>
        <name>3-phosphoshikimate</name>
        <dbReference type="ChEBI" id="CHEBI:145989"/>
    </ligand>
</feature>
<feature type="binding site" evidence="1">
    <location>
        <position position="92"/>
    </location>
    <ligand>
        <name>phosphoenolpyruvate</name>
        <dbReference type="ChEBI" id="CHEBI:58702"/>
    </ligand>
</feature>
<feature type="binding site" evidence="1">
    <location>
        <position position="120"/>
    </location>
    <ligand>
        <name>phosphoenolpyruvate</name>
        <dbReference type="ChEBI" id="CHEBI:58702"/>
    </ligand>
</feature>
<feature type="binding site" evidence="1">
    <location>
        <position position="166"/>
    </location>
    <ligand>
        <name>3-phosphoshikimate</name>
        <dbReference type="ChEBI" id="CHEBI:145989"/>
    </ligand>
</feature>
<feature type="binding site" evidence="1">
    <location>
        <position position="168"/>
    </location>
    <ligand>
        <name>3-phosphoshikimate</name>
        <dbReference type="ChEBI" id="CHEBI:145989"/>
    </ligand>
</feature>
<feature type="binding site" evidence="1">
    <location>
        <position position="168"/>
    </location>
    <ligand>
        <name>phosphoenolpyruvate</name>
        <dbReference type="ChEBI" id="CHEBI:58702"/>
    </ligand>
</feature>
<feature type="binding site" evidence="1">
    <location>
        <position position="312"/>
    </location>
    <ligand>
        <name>3-phosphoshikimate</name>
        <dbReference type="ChEBI" id="CHEBI:145989"/>
    </ligand>
</feature>
<feature type="binding site" evidence="1">
    <location>
        <position position="339"/>
    </location>
    <ligand>
        <name>3-phosphoshikimate</name>
        <dbReference type="ChEBI" id="CHEBI:145989"/>
    </ligand>
</feature>
<feature type="binding site" evidence="1">
    <location>
        <position position="343"/>
    </location>
    <ligand>
        <name>phosphoenolpyruvate</name>
        <dbReference type="ChEBI" id="CHEBI:58702"/>
    </ligand>
</feature>
<feature type="binding site" evidence="1">
    <location>
        <position position="385"/>
    </location>
    <ligand>
        <name>phosphoenolpyruvate</name>
        <dbReference type="ChEBI" id="CHEBI:58702"/>
    </ligand>
</feature>
<keyword id="KW-0028">Amino-acid biosynthesis</keyword>
<keyword id="KW-0057">Aromatic amino acid biosynthesis</keyword>
<keyword id="KW-0963">Cytoplasm</keyword>
<keyword id="KW-1185">Reference proteome</keyword>
<keyword id="KW-0808">Transferase</keyword>
<proteinExistence type="inferred from homology"/>
<comment type="function">
    <text evidence="1">Catalyzes the transfer of the enolpyruvyl moiety of phosphoenolpyruvate (PEP) to the 5-hydroxyl of shikimate-3-phosphate (S3P) to produce enolpyruvyl shikimate-3-phosphate and inorganic phosphate.</text>
</comment>
<comment type="catalytic activity">
    <reaction evidence="1">
        <text>3-phosphoshikimate + phosphoenolpyruvate = 5-O-(1-carboxyvinyl)-3-phosphoshikimate + phosphate</text>
        <dbReference type="Rhea" id="RHEA:21256"/>
        <dbReference type="ChEBI" id="CHEBI:43474"/>
        <dbReference type="ChEBI" id="CHEBI:57701"/>
        <dbReference type="ChEBI" id="CHEBI:58702"/>
        <dbReference type="ChEBI" id="CHEBI:145989"/>
        <dbReference type="EC" id="2.5.1.19"/>
    </reaction>
    <physiologicalReaction direction="left-to-right" evidence="1">
        <dbReference type="Rhea" id="RHEA:21257"/>
    </physiologicalReaction>
</comment>
<comment type="pathway">
    <text evidence="1">Metabolic intermediate biosynthesis; chorismate biosynthesis; chorismate from D-erythrose 4-phosphate and phosphoenolpyruvate: step 6/7.</text>
</comment>
<comment type="subunit">
    <text evidence="1">Monomer.</text>
</comment>
<comment type="subcellular location">
    <subcellularLocation>
        <location evidence="1">Cytoplasm</location>
    </subcellularLocation>
</comment>
<comment type="similarity">
    <text evidence="1">Belongs to the EPSP synthase family.</text>
</comment>
<gene>
    <name evidence="1" type="primary">aroA</name>
    <name type="ordered locus">SPD_1205</name>
</gene>
<organism>
    <name type="scientific">Streptococcus pneumoniae serotype 2 (strain D39 / NCTC 7466)</name>
    <dbReference type="NCBI Taxonomy" id="373153"/>
    <lineage>
        <taxon>Bacteria</taxon>
        <taxon>Bacillati</taxon>
        <taxon>Bacillota</taxon>
        <taxon>Bacilli</taxon>
        <taxon>Lactobacillales</taxon>
        <taxon>Streptococcaceae</taxon>
        <taxon>Streptococcus</taxon>
    </lineage>
</organism>
<evidence type="ECO:0000255" key="1">
    <source>
        <dbReference type="HAMAP-Rule" id="MF_00210"/>
    </source>
</evidence>
<protein>
    <recommendedName>
        <fullName evidence="1">3-phosphoshikimate 1-carboxyvinyltransferase</fullName>
        <ecNumber evidence="1">2.5.1.19</ecNumber>
    </recommendedName>
    <alternativeName>
        <fullName evidence="1">5-enolpyruvylshikimate-3-phosphate synthase</fullName>
        <shortName evidence="1">EPSP synthase</shortName>
        <shortName evidence="1">EPSPS</shortName>
    </alternativeName>
</protein>
<reference key="1">
    <citation type="journal article" date="2007" name="J. Bacteriol.">
        <title>Genome sequence of Avery's virulent serotype 2 strain D39 of Streptococcus pneumoniae and comparison with that of unencapsulated laboratory strain R6.</title>
        <authorList>
            <person name="Lanie J.A."/>
            <person name="Ng W.-L."/>
            <person name="Kazmierczak K.M."/>
            <person name="Andrzejewski T.M."/>
            <person name="Davidsen T.M."/>
            <person name="Wayne K.J."/>
            <person name="Tettelin H."/>
            <person name="Glass J.I."/>
            <person name="Winkler M.E."/>
        </authorList>
    </citation>
    <scope>NUCLEOTIDE SEQUENCE [LARGE SCALE GENOMIC DNA]</scope>
    <source>
        <strain>D39 / NCTC 7466</strain>
    </source>
</reference>
<name>AROA_STRP2</name>
<dbReference type="EC" id="2.5.1.19" evidence="1"/>
<dbReference type="EMBL" id="CP000410">
    <property type="protein sequence ID" value="ABJ54185.1"/>
    <property type="molecule type" value="Genomic_DNA"/>
</dbReference>
<dbReference type="RefSeq" id="WP_001819694.1">
    <property type="nucleotide sequence ID" value="NZ_JAMLJR010000005.1"/>
</dbReference>
<dbReference type="SMR" id="Q04JX6"/>
<dbReference type="PaxDb" id="373153-SPD_1205"/>
<dbReference type="KEGG" id="spd:SPD_1205"/>
<dbReference type="eggNOG" id="COG0128">
    <property type="taxonomic scope" value="Bacteria"/>
</dbReference>
<dbReference type="HOGENOM" id="CLU_024321_0_1_9"/>
<dbReference type="BioCyc" id="SPNE373153:G1G6V-1303-MONOMER"/>
<dbReference type="UniPathway" id="UPA00053">
    <property type="reaction ID" value="UER00089"/>
</dbReference>
<dbReference type="Proteomes" id="UP000001452">
    <property type="component" value="Chromosome"/>
</dbReference>
<dbReference type="GO" id="GO:0005737">
    <property type="term" value="C:cytoplasm"/>
    <property type="evidence" value="ECO:0007669"/>
    <property type="project" value="UniProtKB-SubCell"/>
</dbReference>
<dbReference type="GO" id="GO:0003866">
    <property type="term" value="F:3-phosphoshikimate 1-carboxyvinyltransferase activity"/>
    <property type="evidence" value="ECO:0007669"/>
    <property type="project" value="UniProtKB-UniRule"/>
</dbReference>
<dbReference type="GO" id="GO:0008652">
    <property type="term" value="P:amino acid biosynthetic process"/>
    <property type="evidence" value="ECO:0007669"/>
    <property type="project" value="UniProtKB-KW"/>
</dbReference>
<dbReference type="GO" id="GO:0009073">
    <property type="term" value="P:aromatic amino acid family biosynthetic process"/>
    <property type="evidence" value="ECO:0007669"/>
    <property type="project" value="UniProtKB-KW"/>
</dbReference>
<dbReference type="GO" id="GO:0009423">
    <property type="term" value="P:chorismate biosynthetic process"/>
    <property type="evidence" value="ECO:0007669"/>
    <property type="project" value="UniProtKB-UniRule"/>
</dbReference>
<dbReference type="CDD" id="cd01554">
    <property type="entry name" value="EPT-like"/>
    <property type="match status" value="1"/>
</dbReference>
<dbReference type="FunFam" id="3.65.10.10:FF:000005">
    <property type="entry name" value="3-phosphoshikimate 1-carboxyvinyltransferase"/>
    <property type="match status" value="1"/>
</dbReference>
<dbReference type="FunFam" id="3.65.10.10:FF:000006">
    <property type="entry name" value="3-phosphoshikimate 1-carboxyvinyltransferase"/>
    <property type="match status" value="1"/>
</dbReference>
<dbReference type="Gene3D" id="3.65.10.10">
    <property type="entry name" value="Enolpyruvate transferase domain"/>
    <property type="match status" value="2"/>
</dbReference>
<dbReference type="HAMAP" id="MF_00210">
    <property type="entry name" value="EPSP_synth"/>
    <property type="match status" value="1"/>
</dbReference>
<dbReference type="InterPro" id="IPR001986">
    <property type="entry name" value="Enolpyruvate_Tfrase_dom"/>
</dbReference>
<dbReference type="InterPro" id="IPR036968">
    <property type="entry name" value="Enolpyruvate_Tfrase_sf"/>
</dbReference>
<dbReference type="InterPro" id="IPR006264">
    <property type="entry name" value="EPSP_synthase"/>
</dbReference>
<dbReference type="InterPro" id="IPR023193">
    <property type="entry name" value="EPSP_synthase_CS"/>
</dbReference>
<dbReference type="InterPro" id="IPR013792">
    <property type="entry name" value="RNA3'P_cycl/enolpyr_Trfase_a/b"/>
</dbReference>
<dbReference type="NCBIfam" id="TIGR01356">
    <property type="entry name" value="aroA"/>
    <property type="match status" value="1"/>
</dbReference>
<dbReference type="PANTHER" id="PTHR21090">
    <property type="entry name" value="AROM/DEHYDROQUINATE SYNTHASE"/>
    <property type="match status" value="1"/>
</dbReference>
<dbReference type="PANTHER" id="PTHR21090:SF5">
    <property type="entry name" value="PENTAFUNCTIONAL AROM POLYPEPTIDE"/>
    <property type="match status" value="1"/>
</dbReference>
<dbReference type="Pfam" id="PF00275">
    <property type="entry name" value="EPSP_synthase"/>
    <property type="match status" value="1"/>
</dbReference>
<dbReference type="PIRSF" id="PIRSF000505">
    <property type="entry name" value="EPSPS"/>
    <property type="match status" value="1"/>
</dbReference>
<dbReference type="SUPFAM" id="SSF55205">
    <property type="entry name" value="EPT/RTPC-like"/>
    <property type="match status" value="1"/>
</dbReference>
<dbReference type="PROSITE" id="PS00104">
    <property type="entry name" value="EPSP_SYNTHASE_1"/>
    <property type="match status" value="1"/>
</dbReference>
<dbReference type="PROSITE" id="PS00885">
    <property type="entry name" value="EPSP_SYNTHASE_2"/>
    <property type="match status" value="1"/>
</dbReference>
<sequence length="427" mass="45720">MKLKTNIRHLHGSIRVPGDKSISHRSIIFGSLAEGETKVYDILRGEDVLSTMQVFRDLGVEIEDKDGVITIQGVGMAGLKAPQNALNMGNSGTSIRLISGVLAGADFEVEMFGDDSLSKRPMDRVTLPLKKMGVSISGQTERDLPPLRLKGTKNLRPIHYELPIASAQVKSALMFAALQAKGESVIIEKECTRNHTEDMLKQFGGHLSVDGKKITVQGPQKLTGQKVVVPGDISSAAFWLVAGLINPNSHLVLQNVGINETRTGIIDVIRAMGGKLEVTEIDPVAKSSTLTVESSDLKGTEIGGALIPRLIDELPIIALLATQAQGVTVIKDAEELKVKETDRIQVVADALNSMGADITPTADGMIIKGKSALHGARVNTFGDHRIGMMTAIAALLVADGEVELDRAEAINTSYPSFFDDLESLIHG</sequence>